<sequence>MSTTAKIDFETGLFDEGQYEEAPDLPAIQPKRRTSRAPFIVAGGLLLGVVSENGN</sequence>
<name>YME2_ACIFR</name>
<protein>
    <recommendedName>
        <fullName>Uncharacterized 5.9 kDa protein in mobE 3'region</fullName>
    </recommendedName>
    <alternativeName>
        <fullName>ORF 5</fullName>
    </alternativeName>
</protein>
<dbReference type="EMBL" id="M57717">
    <property type="protein sequence ID" value="AAA27394.1"/>
    <property type="molecule type" value="Genomic_DNA"/>
</dbReference>
<dbReference type="PIR" id="G43256">
    <property type="entry name" value="G43256"/>
</dbReference>
<proteinExistence type="predicted"/>
<accession>P22903</accession>
<feature type="chain" id="PRO_0000068509" description="Uncharacterized 5.9 kDa protein in mobE 3'region">
    <location>
        <begin position="1"/>
        <end position="55"/>
    </location>
</feature>
<keyword id="KW-0614">Plasmid</keyword>
<geneLocation type="plasmid">
    <name>pTF-FC2</name>
</geneLocation>
<organism>
    <name type="scientific">Acidithiobacillus ferrooxidans</name>
    <name type="common">Thiobacillus ferrooxidans</name>
    <dbReference type="NCBI Taxonomy" id="920"/>
    <lineage>
        <taxon>Bacteria</taxon>
        <taxon>Pseudomonadati</taxon>
        <taxon>Pseudomonadota</taxon>
        <taxon>Acidithiobacillia</taxon>
        <taxon>Acidithiobacillales</taxon>
        <taxon>Acidithiobacillaceae</taxon>
        <taxon>Acidithiobacillus</taxon>
    </lineage>
</organism>
<reference key="1">
    <citation type="journal article" date="1992" name="J. Bacteriol.">
        <title>Sequence analysis and characterization of the mobilization region of a broad-host-range plasmid, pTF-FC2, isolated from Thiobacillus ferrooxidans.</title>
        <authorList>
            <person name="Rohrer J."/>
            <person name="Rawlings D.E."/>
        </authorList>
    </citation>
    <scope>NUCLEOTIDE SEQUENCE [GENOMIC DNA]</scope>
</reference>